<gene>
    <name type="ordered locus">RC1356</name>
</gene>
<sequence length="171" mass="19680">MIRKFLLTIFALWVGGFGYYLYLINSYKLNSNTTNAIIVFAGGGHKIETGIAWLKAGYAPILFITGIESTEQLKILLKERNVIEQQVIFAPNKIMSEEDNIKKVVDFIVTYNLTSIILVEHNYNMPFMLNKLEKAIPSSNNIYIVPYPVFSKQKYDVLLKSYHRYLMSILV</sequence>
<reference key="1">
    <citation type="journal article" date="2001" name="Science">
        <title>Mechanisms of evolution in Rickettsia conorii and R. prowazekii.</title>
        <authorList>
            <person name="Ogata H."/>
            <person name="Audic S."/>
            <person name="Renesto-Audiffren P."/>
            <person name="Fournier P.-E."/>
            <person name="Barbe V."/>
            <person name="Samson D."/>
            <person name="Roux V."/>
            <person name="Cossart P."/>
            <person name="Weissenbach J."/>
            <person name="Claverie J.-M."/>
            <person name="Raoult D."/>
        </authorList>
    </citation>
    <scope>NUCLEOTIDE SEQUENCE [LARGE SCALE GENOMIC DNA]</scope>
    <source>
        <strain>ATCC VR-613 / Malish 7</strain>
    </source>
</reference>
<organism>
    <name type="scientific">Rickettsia conorii (strain ATCC VR-613 / Malish 7)</name>
    <dbReference type="NCBI Taxonomy" id="272944"/>
    <lineage>
        <taxon>Bacteria</taxon>
        <taxon>Pseudomonadati</taxon>
        <taxon>Pseudomonadota</taxon>
        <taxon>Alphaproteobacteria</taxon>
        <taxon>Rickettsiales</taxon>
        <taxon>Rickettsiaceae</taxon>
        <taxon>Rickettsieae</taxon>
        <taxon>Rickettsia</taxon>
        <taxon>spotted fever group</taxon>
    </lineage>
</organism>
<keyword id="KW-0472">Membrane</keyword>
<keyword id="KW-0812">Transmembrane</keyword>
<keyword id="KW-1133">Transmembrane helix</keyword>
<dbReference type="EMBL" id="AE006914">
    <property type="protein sequence ID" value="AAL03894.1"/>
    <property type="molecule type" value="Genomic_DNA"/>
</dbReference>
<dbReference type="PIR" id="D97869">
    <property type="entry name" value="D97869"/>
</dbReference>
<dbReference type="RefSeq" id="WP_010977909.1">
    <property type="nucleotide sequence ID" value="NC_003103.1"/>
</dbReference>
<dbReference type="SMR" id="Q92FX1"/>
<dbReference type="GeneID" id="928506"/>
<dbReference type="KEGG" id="rco:RC1356"/>
<dbReference type="HOGENOM" id="CLU_1561703_0_0_5"/>
<dbReference type="Proteomes" id="UP000000816">
    <property type="component" value="Chromosome"/>
</dbReference>
<dbReference type="GO" id="GO:0016020">
    <property type="term" value="C:membrane"/>
    <property type="evidence" value="ECO:0007669"/>
    <property type="project" value="UniProtKB-SubCell"/>
</dbReference>
<accession>Q92FX1</accession>
<evidence type="ECO:0000255" key="1"/>
<evidence type="ECO:0000305" key="2"/>
<proteinExistence type="predicted"/>
<protein>
    <recommendedName>
        <fullName>Uncharacterized protein RC1356</fullName>
    </recommendedName>
</protein>
<comment type="subcellular location">
    <subcellularLocation>
        <location evidence="2">Membrane</location>
        <topology evidence="2">Single-pass membrane protein</topology>
    </subcellularLocation>
</comment>
<name>Y1356_RICCN</name>
<feature type="chain" id="PRO_0000101430" description="Uncharacterized protein RC1356">
    <location>
        <begin position="1"/>
        <end position="171"/>
    </location>
</feature>
<feature type="transmembrane region" description="Helical" evidence="1">
    <location>
        <begin position="5"/>
        <end position="25"/>
    </location>
</feature>